<gene>
    <name type="primary">unc-119</name>
    <name type="ORF">CG1659</name>
</gene>
<reference key="1">
    <citation type="journal article" date="2000" name="J. Neurogenet.">
        <title>The UNC-119 family of neural proteins is functionally conserved between humans, Drosophila and C. elegans.</title>
        <authorList>
            <person name="Maduro M.F."/>
            <person name="Gordon M."/>
            <person name="Jacobs R."/>
            <person name="Pilgrim D.B."/>
        </authorList>
    </citation>
    <scope>NUCLEOTIDE SEQUENCE [GENOMIC DNA]</scope>
    <source>
        <strain>Oregon-R</strain>
    </source>
</reference>
<reference key="2">
    <citation type="journal article" date="2000" name="Science">
        <title>The genome sequence of Drosophila melanogaster.</title>
        <authorList>
            <person name="Adams M.D."/>
            <person name="Celniker S.E."/>
            <person name="Holt R.A."/>
            <person name="Evans C.A."/>
            <person name="Gocayne J.D."/>
            <person name="Amanatides P.G."/>
            <person name="Scherer S.E."/>
            <person name="Li P.W."/>
            <person name="Hoskins R.A."/>
            <person name="Galle R.F."/>
            <person name="George R.A."/>
            <person name="Lewis S.E."/>
            <person name="Richards S."/>
            <person name="Ashburner M."/>
            <person name="Henderson S.N."/>
            <person name="Sutton G.G."/>
            <person name="Wortman J.R."/>
            <person name="Yandell M.D."/>
            <person name="Zhang Q."/>
            <person name="Chen L.X."/>
            <person name="Brandon R.C."/>
            <person name="Rogers Y.-H.C."/>
            <person name="Blazej R.G."/>
            <person name="Champe M."/>
            <person name="Pfeiffer B.D."/>
            <person name="Wan K.H."/>
            <person name="Doyle C."/>
            <person name="Baxter E.G."/>
            <person name="Helt G."/>
            <person name="Nelson C.R."/>
            <person name="Miklos G.L.G."/>
            <person name="Abril J.F."/>
            <person name="Agbayani A."/>
            <person name="An H.-J."/>
            <person name="Andrews-Pfannkoch C."/>
            <person name="Baldwin D."/>
            <person name="Ballew R.M."/>
            <person name="Basu A."/>
            <person name="Baxendale J."/>
            <person name="Bayraktaroglu L."/>
            <person name="Beasley E.M."/>
            <person name="Beeson K.Y."/>
            <person name="Benos P.V."/>
            <person name="Berman B.P."/>
            <person name="Bhandari D."/>
            <person name="Bolshakov S."/>
            <person name="Borkova D."/>
            <person name="Botchan M.R."/>
            <person name="Bouck J."/>
            <person name="Brokstein P."/>
            <person name="Brottier P."/>
            <person name="Burtis K.C."/>
            <person name="Busam D.A."/>
            <person name="Butler H."/>
            <person name="Cadieu E."/>
            <person name="Center A."/>
            <person name="Chandra I."/>
            <person name="Cherry J.M."/>
            <person name="Cawley S."/>
            <person name="Dahlke C."/>
            <person name="Davenport L.B."/>
            <person name="Davies P."/>
            <person name="de Pablos B."/>
            <person name="Delcher A."/>
            <person name="Deng Z."/>
            <person name="Mays A.D."/>
            <person name="Dew I."/>
            <person name="Dietz S.M."/>
            <person name="Dodson K."/>
            <person name="Doup L.E."/>
            <person name="Downes M."/>
            <person name="Dugan-Rocha S."/>
            <person name="Dunkov B.C."/>
            <person name="Dunn P."/>
            <person name="Durbin K.J."/>
            <person name="Evangelista C.C."/>
            <person name="Ferraz C."/>
            <person name="Ferriera S."/>
            <person name="Fleischmann W."/>
            <person name="Fosler C."/>
            <person name="Gabrielian A.E."/>
            <person name="Garg N.S."/>
            <person name="Gelbart W.M."/>
            <person name="Glasser K."/>
            <person name="Glodek A."/>
            <person name="Gong F."/>
            <person name="Gorrell J.H."/>
            <person name="Gu Z."/>
            <person name="Guan P."/>
            <person name="Harris M."/>
            <person name="Harris N.L."/>
            <person name="Harvey D.A."/>
            <person name="Heiman T.J."/>
            <person name="Hernandez J.R."/>
            <person name="Houck J."/>
            <person name="Hostin D."/>
            <person name="Houston K.A."/>
            <person name="Howland T.J."/>
            <person name="Wei M.-H."/>
            <person name="Ibegwam C."/>
            <person name="Jalali M."/>
            <person name="Kalush F."/>
            <person name="Karpen G.H."/>
            <person name="Ke Z."/>
            <person name="Kennison J.A."/>
            <person name="Ketchum K.A."/>
            <person name="Kimmel B.E."/>
            <person name="Kodira C.D."/>
            <person name="Kraft C.L."/>
            <person name="Kravitz S."/>
            <person name="Kulp D."/>
            <person name="Lai Z."/>
            <person name="Lasko P."/>
            <person name="Lei Y."/>
            <person name="Levitsky A.A."/>
            <person name="Li J.H."/>
            <person name="Li Z."/>
            <person name="Liang Y."/>
            <person name="Lin X."/>
            <person name="Liu X."/>
            <person name="Mattei B."/>
            <person name="McIntosh T.C."/>
            <person name="McLeod M.P."/>
            <person name="McPherson D."/>
            <person name="Merkulov G."/>
            <person name="Milshina N.V."/>
            <person name="Mobarry C."/>
            <person name="Morris J."/>
            <person name="Moshrefi A."/>
            <person name="Mount S.M."/>
            <person name="Moy M."/>
            <person name="Murphy B."/>
            <person name="Murphy L."/>
            <person name="Muzny D.M."/>
            <person name="Nelson D.L."/>
            <person name="Nelson D.R."/>
            <person name="Nelson K.A."/>
            <person name="Nixon K."/>
            <person name="Nusskern D.R."/>
            <person name="Pacleb J.M."/>
            <person name="Palazzolo M."/>
            <person name="Pittman G.S."/>
            <person name="Pan S."/>
            <person name="Pollard J."/>
            <person name="Puri V."/>
            <person name="Reese M.G."/>
            <person name="Reinert K."/>
            <person name="Remington K."/>
            <person name="Saunders R.D.C."/>
            <person name="Scheeler F."/>
            <person name="Shen H."/>
            <person name="Shue B.C."/>
            <person name="Siden-Kiamos I."/>
            <person name="Simpson M."/>
            <person name="Skupski M.P."/>
            <person name="Smith T.J."/>
            <person name="Spier E."/>
            <person name="Spradling A.C."/>
            <person name="Stapleton M."/>
            <person name="Strong R."/>
            <person name="Sun E."/>
            <person name="Svirskas R."/>
            <person name="Tector C."/>
            <person name="Turner R."/>
            <person name="Venter E."/>
            <person name="Wang A.H."/>
            <person name="Wang X."/>
            <person name="Wang Z.-Y."/>
            <person name="Wassarman D.A."/>
            <person name="Weinstock G.M."/>
            <person name="Weissenbach J."/>
            <person name="Williams S.M."/>
            <person name="Woodage T."/>
            <person name="Worley K.C."/>
            <person name="Wu D."/>
            <person name="Yang S."/>
            <person name="Yao Q.A."/>
            <person name="Ye J."/>
            <person name="Yeh R.-F."/>
            <person name="Zaveri J.S."/>
            <person name="Zhan M."/>
            <person name="Zhang G."/>
            <person name="Zhao Q."/>
            <person name="Zheng L."/>
            <person name="Zheng X.H."/>
            <person name="Zhong F.N."/>
            <person name="Zhong W."/>
            <person name="Zhou X."/>
            <person name="Zhu S.C."/>
            <person name="Zhu X."/>
            <person name="Smith H.O."/>
            <person name="Gibbs R.A."/>
            <person name="Myers E.W."/>
            <person name="Rubin G.M."/>
            <person name="Venter J.C."/>
        </authorList>
    </citation>
    <scope>NUCLEOTIDE SEQUENCE [LARGE SCALE GENOMIC DNA]</scope>
    <source>
        <strain>Berkeley</strain>
    </source>
</reference>
<reference key="3">
    <citation type="journal article" date="2002" name="Genome Biol.">
        <title>Annotation of the Drosophila melanogaster euchromatic genome: a systematic review.</title>
        <authorList>
            <person name="Misra S."/>
            <person name="Crosby M.A."/>
            <person name="Mungall C.J."/>
            <person name="Matthews B.B."/>
            <person name="Campbell K.S."/>
            <person name="Hradecky P."/>
            <person name="Huang Y."/>
            <person name="Kaminker J.S."/>
            <person name="Millburn G.H."/>
            <person name="Prochnik S.E."/>
            <person name="Smith C.D."/>
            <person name="Tupy J.L."/>
            <person name="Whitfield E.J."/>
            <person name="Bayraktaroglu L."/>
            <person name="Berman B.P."/>
            <person name="Bettencourt B.R."/>
            <person name="Celniker S.E."/>
            <person name="de Grey A.D.N.J."/>
            <person name="Drysdale R.A."/>
            <person name="Harris N.L."/>
            <person name="Richter J."/>
            <person name="Russo S."/>
            <person name="Schroeder A.J."/>
            <person name="Shu S.Q."/>
            <person name="Stapleton M."/>
            <person name="Yamada C."/>
            <person name="Ashburner M."/>
            <person name="Gelbart W.M."/>
            <person name="Rubin G.M."/>
            <person name="Lewis S.E."/>
        </authorList>
    </citation>
    <scope>GENOME REANNOTATION</scope>
    <source>
        <strain>Berkeley</strain>
    </source>
</reference>
<protein>
    <recommendedName>
        <fullName>Protein unc-119 homolog</fullName>
        <shortName>DmUNC-119</shortName>
    </recommendedName>
</protein>
<evidence type="ECO:0000250" key="1"/>
<evidence type="ECO:0000256" key="2">
    <source>
        <dbReference type="SAM" id="MobiDB-lite"/>
    </source>
</evidence>
<evidence type="ECO:0000305" key="3"/>
<sequence length="265" mass="28412">MSVVGKQLNPVQSSGAGAVTTSSSAAAGSSSSNSGVEANGGSGGSSGAAAAGAGASGDAKRPAESSSVTPDEVLHLTKITDDYLCSANANVFEIDFTRFKIRDLESGAVLFEIAKPPSEQYPEGLSSDETMLAAAEKLSLDDTADPNAGRYVRYQFTPAFLNLKTVGATVEFTVGSQPLNNFRMIERHFFRDRLLKTFDFEFGFCFPFSKNTVEHIYEFPNLPPDLVAEMISSPFETRSDSFYFVGNRLVMHNKADYAYDGGNIV</sequence>
<name>UN119_DROME</name>
<proteinExistence type="evidence at transcript level"/>
<organism>
    <name type="scientific">Drosophila melanogaster</name>
    <name type="common">Fruit fly</name>
    <dbReference type="NCBI Taxonomy" id="7227"/>
    <lineage>
        <taxon>Eukaryota</taxon>
        <taxon>Metazoa</taxon>
        <taxon>Ecdysozoa</taxon>
        <taxon>Arthropoda</taxon>
        <taxon>Hexapoda</taxon>
        <taxon>Insecta</taxon>
        <taxon>Pterygota</taxon>
        <taxon>Neoptera</taxon>
        <taxon>Endopterygota</taxon>
        <taxon>Diptera</taxon>
        <taxon>Brachycera</taxon>
        <taxon>Muscomorpha</taxon>
        <taxon>Ephydroidea</taxon>
        <taxon>Drosophilidae</taxon>
        <taxon>Drosophila</taxon>
        <taxon>Sophophora</taxon>
    </lineage>
</organism>
<feature type="chain" id="PRO_0000221217" description="Protein unc-119 homolog">
    <location>
        <begin position="1"/>
        <end position="265"/>
    </location>
</feature>
<feature type="region of interest" description="Disordered" evidence="2">
    <location>
        <begin position="1"/>
        <end position="69"/>
    </location>
</feature>
<feature type="compositionally biased region" description="Low complexity" evidence="2">
    <location>
        <begin position="13"/>
        <end position="37"/>
    </location>
</feature>
<feature type="compositionally biased region" description="Low complexity" evidence="2">
    <location>
        <begin position="47"/>
        <end position="57"/>
    </location>
</feature>
<feature type="binding site" evidence="1">
    <location>
        <position position="154"/>
    </location>
    <ligand>
        <name>tetradecanoate</name>
        <dbReference type="ChEBI" id="CHEBI:30807"/>
    </ligand>
</feature>
<accession>Q9XYQ2</accession>
<comment type="function">
    <text evidence="1">Myristoyl-binding protein that acts as a cargo adapter: specifically binds the myristoyl moiety of a subset of N-terminally myristoylated proteins and is required for their localization.</text>
</comment>
<comment type="tissue specificity">
    <text>Expressed in nervous system.</text>
</comment>
<comment type="domain">
    <text evidence="1">Adopts an immunoglobulin-like beta-sandwich fold forming a hydrophobic cavity that capture N-terminally myristoylated target peptides. Phe residues within the hydrophobic beta sandwich are required for myristate binding (By similarity).</text>
</comment>
<comment type="similarity">
    <text evidence="3">Belongs to the PDE6D/unc-119 family.</text>
</comment>
<dbReference type="EMBL" id="AF119102">
    <property type="protein sequence ID" value="AAD30967.1"/>
    <property type="molecule type" value="Genomic_DNA"/>
</dbReference>
<dbReference type="EMBL" id="AE014298">
    <property type="protein sequence ID" value="AAF46250.1"/>
    <property type="molecule type" value="Genomic_DNA"/>
</dbReference>
<dbReference type="RefSeq" id="NP_001284978.1">
    <property type="nucleotide sequence ID" value="NM_001298049.1"/>
</dbReference>
<dbReference type="RefSeq" id="NP_572389.1">
    <property type="nucleotide sequence ID" value="NM_132161.5"/>
</dbReference>
<dbReference type="SMR" id="Q9XYQ2"/>
<dbReference type="BioGRID" id="58140">
    <property type="interactions" value="9"/>
</dbReference>
<dbReference type="DIP" id="DIP-22008N"/>
<dbReference type="FunCoup" id="Q9XYQ2">
    <property type="interactions" value="351"/>
</dbReference>
<dbReference type="IntAct" id="Q9XYQ2">
    <property type="interactions" value="15"/>
</dbReference>
<dbReference type="STRING" id="7227.FBpp0312199"/>
<dbReference type="PaxDb" id="7227-FBpp0071024"/>
<dbReference type="DNASU" id="31664"/>
<dbReference type="EnsemblMetazoa" id="FBtr0071066">
    <property type="protein sequence ID" value="FBpp0071024"/>
    <property type="gene ID" value="FBgn0025549"/>
</dbReference>
<dbReference type="EnsemblMetazoa" id="FBtr0346619">
    <property type="protein sequence ID" value="FBpp0312199"/>
    <property type="gene ID" value="FBgn0025549"/>
</dbReference>
<dbReference type="GeneID" id="31664"/>
<dbReference type="KEGG" id="dme:Dmel_CG1659"/>
<dbReference type="AGR" id="FB:FBgn0025549"/>
<dbReference type="CTD" id="31664"/>
<dbReference type="FlyBase" id="FBgn0025549">
    <property type="gene designation" value="unc-119"/>
</dbReference>
<dbReference type="VEuPathDB" id="VectorBase:FBgn0025549"/>
<dbReference type="eggNOG" id="KOG4037">
    <property type="taxonomic scope" value="Eukaryota"/>
</dbReference>
<dbReference type="GeneTree" id="ENSGT00390000014595"/>
<dbReference type="HOGENOM" id="CLU_088825_2_0_1"/>
<dbReference type="InParanoid" id="Q9XYQ2"/>
<dbReference type="OMA" id="CLVMHNK"/>
<dbReference type="OrthoDB" id="10248777at2759"/>
<dbReference type="PhylomeDB" id="Q9XYQ2"/>
<dbReference type="BioGRID-ORCS" id="31664">
    <property type="hits" value="0 hits in 3 CRISPR screens"/>
</dbReference>
<dbReference type="GenomeRNAi" id="31664"/>
<dbReference type="PRO" id="PR:Q9XYQ2"/>
<dbReference type="Proteomes" id="UP000000803">
    <property type="component" value="Chromosome X"/>
</dbReference>
<dbReference type="Bgee" id="FBgn0025549">
    <property type="expression patterns" value="Expressed in medullary intrinsic neuron Mi4 (Drosophila) in insect head and 280 other cell types or tissues"/>
</dbReference>
<dbReference type="ExpressionAtlas" id="Q9XYQ2">
    <property type="expression patterns" value="baseline and differential"/>
</dbReference>
<dbReference type="GO" id="GO:0005929">
    <property type="term" value="C:cilium"/>
    <property type="evidence" value="ECO:0000318"/>
    <property type="project" value="GO_Central"/>
</dbReference>
<dbReference type="GO" id="GO:0008289">
    <property type="term" value="F:lipid binding"/>
    <property type="evidence" value="ECO:0000318"/>
    <property type="project" value="GO_Central"/>
</dbReference>
<dbReference type="GO" id="GO:0060271">
    <property type="term" value="P:cilium assembly"/>
    <property type="evidence" value="ECO:0000318"/>
    <property type="project" value="GO_Central"/>
</dbReference>
<dbReference type="GO" id="GO:0042953">
    <property type="term" value="P:lipoprotein transport"/>
    <property type="evidence" value="ECO:0000318"/>
    <property type="project" value="GO_Central"/>
</dbReference>
<dbReference type="GO" id="GO:0007399">
    <property type="term" value="P:nervous system development"/>
    <property type="evidence" value="ECO:0000316"/>
    <property type="project" value="FlyBase"/>
</dbReference>
<dbReference type="FunFam" id="2.70.50.40:FF:000005">
    <property type="entry name" value="Protein unc-119"/>
    <property type="match status" value="1"/>
</dbReference>
<dbReference type="Gene3D" id="2.70.50.40">
    <property type="entry name" value="GMP phosphodiesterase, delta subunit"/>
    <property type="match status" value="1"/>
</dbReference>
<dbReference type="InterPro" id="IPR014756">
    <property type="entry name" value="Ig_E-set"/>
</dbReference>
<dbReference type="InterPro" id="IPR051519">
    <property type="entry name" value="PDE6D_unc-119_myristoyl-bd"/>
</dbReference>
<dbReference type="InterPro" id="IPR008015">
    <property type="entry name" value="PDED_dom"/>
</dbReference>
<dbReference type="InterPro" id="IPR037036">
    <property type="entry name" value="PDED_dom_sf"/>
</dbReference>
<dbReference type="PANTHER" id="PTHR12951:SF1">
    <property type="entry name" value="PROTEIN UNC-119 HOMOLOG"/>
    <property type="match status" value="1"/>
</dbReference>
<dbReference type="PANTHER" id="PTHR12951">
    <property type="entry name" value="RETINAL PROTEIN 4"/>
    <property type="match status" value="1"/>
</dbReference>
<dbReference type="Pfam" id="PF05351">
    <property type="entry name" value="GMP_PDE_delta"/>
    <property type="match status" value="1"/>
</dbReference>
<dbReference type="SUPFAM" id="SSF81296">
    <property type="entry name" value="E set domains"/>
    <property type="match status" value="1"/>
</dbReference>
<keyword id="KW-0446">Lipid-binding</keyword>
<keyword id="KW-0653">Protein transport</keyword>
<keyword id="KW-1185">Reference proteome</keyword>
<keyword id="KW-0813">Transport</keyword>